<evidence type="ECO:0000255" key="1"/>
<evidence type="ECO:0000305" key="2"/>
<accession>Q10CV4</accession>
<accession>A0A0P0W2Z6</accession>
<accession>Q8W300</accession>
<sequence length="299" mass="31170">MAAEAAPEWVEKGDNAWPLAAATLVGLQSVPRLVILYGDCGAVGPRTEKDREAFPPNNVLLTLAGAGLLLWMGWTGFNGGAPYAANVDASVTVVNTHLCTATSLLVWLLLDSFVFGRLSVISAVQGMITGLVCVTPAARLVLHKRSRLLARVDDTLAVLHTHGVAGSLSGVLTGLLLLAEPRFARLFFGDDPRYVGLAYAVRDGRAGSGLRQVGVQLAGIAFVVALNVAVTSAVCLAVRVAVPQLAGGGDAIHGEDAYAVWGDGETYEQYSVHGGGSNHGGFPMTANPVASKADEMIWI</sequence>
<keyword id="KW-0472">Membrane</keyword>
<keyword id="KW-1185">Reference proteome</keyword>
<keyword id="KW-0812">Transmembrane</keyword>
<keyword id="KW-1133">Transmembrane helix</keyword>
<protein>
    <recommendedName>
        <fullName>Putative ammonium transporter 4 member 1</fullName>
        <shortName>OsAMT4;1</shortName>
    </recommendedName>
</protein>
<gene>
    <name type="primary">AMT4-1</name>
    <name type="ordered locus">Os03g0749000</name>
    <name type="ordered locus">Os03g0749050</name>
    <name type="ordered locus">LOC_Os03g53780</name>
    <name type="ORF">OSJNBa0069E14.17</name>
</gene>
<feature type="chain" id="PRO_0000385653" description="Putative ammonium transporter 4 member 1">
    <location>
        <begin position="1"/>
        <end position="299"/>
    </location>
</feature>
<feature type="transmembrane region" description="Helical" evidence="1">
    <location>
        <begin position="16"/>
        <end position="36"/>
    </location>
</feature>
<feature type="transmembrane region" description="Helical" evidence="1">
    <location>
        <begin position="59"/>
        <end position="79"/>
    </location>
</feature>
<feature type="transmembrane region" description="Helical" evidence="1">
    <location>
        <begin position="104"/>
        <end position="124"/>
    </location>
</feature>
<feature type="transmembrane region" description="Helical" evidence="1">
    <location>
        <begin position="158"/>
        <end position="178"/>
    </location>
</feature>
<feature type="transmembrane region" description="Helical" evidence="1">
    <location>
        <begin position="218"/>
        <end position="238"/>
    </location>
</feature>
<organism>
    <name type="scientific">Oryza sativa subsp. japonica</name>
    <name type="common">Rice</name>
    <dbReference type="NCBI Taxonomy" id="39947"/>
    <lineage>
        <taxon>Eukaryota</taxon>
        <taxon>Viridiplantae</taxon>
        <taxon>Streptophyta</taxon>
        <taxon>Embryophyta</taxon>
        <taxon>Tracheophyta</taxon>
        <taxon>Spermatophyta</taxon>
        <taxon>Magnoliopsida</taxon>
        <taxon>Liliopsida</taxon>
        <taxon>Poales</taxon>
        <taxon>Poaceae</taxon>
        <taxon>BOP clade</taxon>
        <taxon>Oryzoideae</taxon>
        <taxon>Oryzeae</taxon>
        <taxon>Oryzinae</taxon>
        <taxon>Oryza</taxon>
        <taxon>Oryza sativa</taxon>
    </lineage>
</organism>
<comment type="subcellular location">
    <subcellularLocation>
        <location evidence="2">Membrane</location>
        <topology evidence="2">Multi-pass membrane protein</topology>
    </subcellularLocation>
</comment>
<comment type="similarity">
    <text evidence="2">Belongs to the ammonia transporter channel (TC 1.A.11.2) family.</text>
</comment>
<comment type="caution">
    <text evidence="2">This protein lacks transmembrane domains and is probably not involved in transport.</text>
</comment>
<name>AMT41_ORYSJ</name>
<reference key="1">
    <citation type="journal article" date="2005" name="Genome Res.">
        <title>Sequence, annotation, and analysis of synteny between rice chromosome 3 and diverged grass species.</title>
        <authorList>
            <consortium name="The rice chromosome 3 sequencing consortium"/>
            <person name="Buell C.R."/>
            <person name="Yuan Q."/>
            <person name="Ouyang S."/>
            <person name="Liu J."/>
            <person name="Zhu W."/>
            <person name="Wang A."/>
            <person name="Maiti R."/>
            <person name="Haas B."/>
            <person name="Wortman J."/>
            <person name="Pertea M."/>
            <person name="Jones K.M."/>
            <person name="Kim M."/>
            <person name="Overton L."/>
            <person name="Tsitrin T."/>
            <person name="Fadrosh D."/>
            <person name="Bera J."/>
            <person name="Weaver B."/>
            <person name="Jin S."/>
            <person name="Johri S."/>
            <person name="Reardon M."/>
            <person name="Webb K."/>
            <person name="Hill J."/>
            <person name="Moffat K."/>
            <person name="Tallon L."/>
            <person name="Van Aken S."/>
            <person name="Lewis M."/>
            <person name="Utterback T."/>
            <person name="Feldblyum T."/>
            <person name="Zismann V."/>
            <person name="Iobst S."/>
            <person name="Hsiao J."/>
            <person name="de Vazeille A.R."/>
            <person name="Salzberg S.L."/>
            <person name="White O."/>
            <person name="Fraser C.M."/>
            <person name="Yu Y."/>
            <person name="Kim H."/>
            <person name="Rambo T."/>
            <person name="Currie J."/>
            <person name="Collura K."/>
            <person name="Kernodle-Thompson S."/>
            <person name="Wei F."/>
            <person name="Kudrna K."/>
            <person name="Ammiraju J.S.S."/>
            <person name="Luo M."/>
            <person name="Goicoechea J.L."/>
            <person name="Wing R.A."/>
            <person name="Henry D."/>
            <person name="Oates R."/>
            <person name="Palmer M."/>
            <person name="Pries G."/>
            <person name="Saski C."/>
            <person name="Simmons J."/>
            <person name="Soderlund C."/>
            <person name="Nelson W."/>
            <person name="de la Bastide M."/>
            <person name="Spiegel L."/>
            <person name="Nascimento L."/>
            <person name="Huang E."/>
            <person name="Preston R."/>
            <person name="Zutavern T."/>
            <person name="Palmer L."/>
            <person name="O'Shaughnessy A."/>
            <person name="Dike S."/>
            <person name="McCombie W.R."/>
            <person name="Minx P."/>
            <person name="Cordum H."/>
            <person name="Wilson R."/>
            <person name="Jin W."/>
            <person name="Lee H.R."/>
            <person name="Jiang J."/>
            <person name="Jackson S."/>
        </authorList>
    </citation>
    <scope>NUCLEOTIDE SEQUENCE [LARGE SCALE GENOMIC DNA]</scope>
    <source>
        <strain>cv. Nipponbare</strain>
    </source>
</reference>
<reference key="2">
    <citation type="journal article" date="2005" name="Nature">
        <title>The map-based sequence of the rice genome.</title>
        <authorList>
            <consortium name="International rice genome sequencing project (IRGSP)"/>
        </authorList>
    </citation>
    <scope>NUCLEOTIDE SEQUENCE [LARGE SCALE GENOMIC DNA]</scope>
    <source>
        <strain>cv. Nipponbare</strain>
    </source>
</reference>
<reference key="3">
    <citation type="journal article" date="2013" name="Rice">
        <title>Improvement of the Oryza sativa Nipponbare reference genome using next generation sequence and optical map data.</title>
        <authorList>
            <person name="Kawahara Y."/>
            <person name="de la Bastide M."/>
            <person name="Hamilton J.P."/>
            <person name="Kanamori H."/>
            <person name="McCombie W.R."/>
            <person name="Ouyang S."/>
            <person name="Schwartz D.C."/>
            <person name="Tanaka T."/>
            <person name="Wu J."/>
            <person name="Zhou S."/>
            <person name="Childs K.L."/>
            <person name="Davidson R.M."/>
            <person name="Lin H."/>
            <person name="Quesada-Ocampo L."/>
            <person name="Vaillancourt B."/>
            <person name="Sakai H."/>
            <person name="Lee S.S."/>
            <person name="Kim J."/>
            <person name="Numa H."/>
            <person name="Itoh T."/>
            <person name="Buell C.R."/>
            <person name="Matsumoto T."/>
        </authorList>
    </citation>
    <scope>GENOME REANNOTATION</scope>
    <source>
        <strain>cv. Nipponbare</strain>
    </source>
</reference>
<proteinExistence type="inferred from homology"/>
<dbReference type="EMBL" id="AC091811">
    <property type="protein sequence ID" value="AAL58960.1"/>
    <property type="molecule type" value="Genomic_DNA"/>
</dbReference>
<dbReference type="EMBL" id="DP000009">
    <property type="protein sequence ID" value="ABF98880.1"/>
    <property type="molecule type" value="Genomic_DNA"/>
</dbReference>
<dbReference type="EMBL" id="AP014959">
    <property type="protein sequence ID" value="BAS86388.1"/>
    <property type="molecule type" value="Genomic_DNA"/>
</dbReference>
<dbReference type="SMR" id="Q10CV4"/>
<dbReference type="FunCoup" id="Q10CV4">
    <property type="interactions" value="245"/>
</dbReference>
<dbReference type="STRING" id="39947.Q10CV4"/>
<dbReference type="PaxDb" id="39947-Q10CV4"/>
<dbReference type="EnsemblPlants" id="Os03t0749000-00">
    <property type="protein sequence ID" value="Os03t0749000-00"/>
    <property type="gene ID" value="Os03g0749000"/>
</dbReference>
<dbReference type="Gramene" id="Os03t0749000-00">
    <property type="protein sequence ID" value="Os03t0749000-00"/>
    <property type="gene ID" value="Os03g0749000"/>
</dbReference>
<dbReference type="eggNOG" id="KOG0682">
    <property type="taxonomic scope" value="Eukaryota"/>
</dbReference>
<dbReference type="HOGENOM" id="CLU_000445_33_5_1"/>
<dbReference type="InParanoid" id="Q10CV4"/>
<dbReference type="OMA" id="ERGRLWP"/>
<dbReference type="Proteomes" id="UP000000763">
    <property type="component" value="Chromosome 3"/>
</dbReference>
<dbReference type="Proteomes" id="UP000059680">
    <property type="component" value="Chromosome 3"/>
</dbReference>
<dbReference type="GO" id="GO:0016020">
    <property type="term" value="C:membrane"/>
    <property type="evidence" value="ECO:0007669"/>
    <property type="project" value="UniProtKB-SubCell"/>
</dbReference>
<dbReference type="GO" id="GO:0008519">
    <property type="term" value="F:ammonium channel activity"/>
    <property type="evidence" value="ECO:0007669"/>
    <property type="project" value="InterPro"/>
</dbReference>
<dbReference type="FunFam" id="1.10.3430.10:FF:000024">
    <property type="entry name" value="Putative ammonium transporter 4 member 1"/>
    <property type="match status" value="1"/>
</dbReference>
<dbReference type="Gene3D" id="1.10.3430.10">
    <property type="entry name" value="Ammonium transporter AmtB like domains"/>
    <property type="match status" value="1"/>
</dbReference>
<dbReference type="InterPro" id="IPR029020">
    <property type="entry name" value="Ammonium/urea_transptr"/>
</dbReference>
<dbReference type="InterPro" id="IPR001905">
    <property type="entry name" value="Ammonium_transpt"/>
</dbReference>
<dbReference type="InterPro" id="IPR024041">
    <property type="entry name" value="NH4_transpt_AmtB-like_dom"/>
</dbReference>
<dbReference type="PANTHER" id="PTHR43029:SF11">
    <property type="entry name" value="AMMONIUM TRANSPORTER"/>
    <property type="match status" value="1"/>
</dbReference>
<dbReference type="PANTHER" id="PTHR43029">
    <property type="entry name" value="AMMONIUM TRANSPORTER MEP2"/>
    <property type="match status" value="1"/>
</dbReference>
<dbReference type="Pfam" id="PF00909">
    <property type="entry name" value="Ammonium_transp"/>
    <property type="match status" value="2"/>
</dbReference>
<dbReference type="SUPFAM" id="SSF111352">
    <property type="entry name" value="Ammonium transporter"/>
    <property type="match status" value="1"/>
</dbReference>